<accession>Q99161</accession>
<accession>Q6CE92</accession>
<reference key="1">
    <citation type="journal article" date="1997" name="Curr. Genet.">
        <title>Cloning the Yarrowia lipolytica homologue of the Saccharomyces cerevisiae SEC62 gene.</title>
        <authorList>
            <person name="Swennen D."/>
            <person name="Joyet P."/>
            <person name="Gaillardin C."/>
        </authorList>
    </citation>
    <scope>NUCLEOTIDE SEQUENCE [GENOMIC DNA]</scope>
    <source>
        <strain>ATCC 20460 / W29 / CBS 7504 / IFP29</strain>
    </source>
</reference>
<reference key="2">
    <citation type="journal article" date="2004" name="Nature">
        <title>Genome evolution in yeasts.</title>
        <authorList>
            <person name="Dujon B."/>
            <person name="Sherman D."/>
            <person name="Fischer G."/>
            <person name="Durrens P."/>
            <person name="Casaregola S."/>
            <person name="Lafontaine I."/>
            <person name="de Montigny J."/>
            <person name="Marck C."/>
            <person name="Neuveglise C."/>
            <person name="Talla E."/>
            <person name="Goffard N."/>
            <person name="Frangeul L."/>
            <person name="Aigle M."/>
            <person name="Anthouard V."/>
            <person name="Babour A."/>
            <person name="Barbe V."/>
            <person name="Barnay S."/>
            <person name="Blanchin S."/>
            <person name="Beckerich J.-M."/>
            <person name="Beyne E."/>
            <person name="Bleykasten C."/>
            <person name="Boisrame A."/>
            <person name="Boyer J."/>
            <person name="Cattolico L."/>
            <person name="Confanioleri F."/>
            <person name="de Daruvar A."/>
            <person name="Despons L."/>
            <person name="Fabre E."/>
            <person name="Fairhead C."/>
            <person name="Ferry-Dumazet H."/>
            <person name="Groppi A."/>
            <person name="Hantraye F."/>
            <person name="Hennequin C."/>
            <person name="Jauniaux N."/>
            <person name="Joyet P."/>
            <person name="Kachouri R."/>
            <person name="Kerrest A."/>
            <person name="Koszul R."/>
            <person name="Lemaire M."/>
            <person name="Lesur I."/>
            <person name="Ma L."/>
            <person name="Muller H."/>
            <person name="Nicaud J.-M."/>
            <person name="Nikolski M."/>
            <person name="Oztas S."/>
            <person name="Ozier-Kalogeropoulos O."/>
            <person name="Pellenz S."/>
            <person name="Potier S."/>
            <person name="Richard G.-F."/>
            <person name="Straub M.-L."/>
            <person name="Suleau A."/>
            <person name="Swennen D."/>
            <person name="Tekaia F."/>
            <person name="Wesolowski-Louvel M."/>
            <person name="Westhof E."/>
            <person name="Wirth B."/>
            <person name="Zeniou-Meyer M."/>
            <person name="Zivanovic Y."/>
            <person name="Bolotin-Fukuhara M."/>
            <person name="Thierry A."/>
            <person name="Bouchier C."/>
            <person name="Caudron B."/>
            <person name="Scarpelli C."/>
            <person name="Gaillardin C."/>
            <person name="Weissenbach J."/>
            <person name="Wincker P."/>
            <person name="Souciet J.-L."/>
        </authorList>
    </citation>
    <scope>NUCLEOTIDE SEQUENCE [LARGE SCALE GENOMIC DNA]</scope>
    <source>
        <strain>CLIB 122 / E 150</strain>
    </source>
</reference>
<keyword id="KW-0256">Endoplasmic reticulum</keyword>
<keyword id="KW-0472">Membrane</keyword>
<keyword id="KW-0653">Protein transport</keyword>
<keyword id="KW-1185">Reference proteome</keyword>
<keyword id="KW-0811">Translocation</keyword>
<keyword id="KW-0812">Transmembrane</keyword>
<keyword id="KW-1133">Transmembrane helix</keyword>
<keyword id="KW-0813">Transport</keyword>
<evidence type="ECO:0000250" key="1"/>
<evidence type="ECO:0000255" key="2"/>
<evidence type="ECO:0000256" key="3">
    <source>
        <dbReference type="SAM" id="MobiDB-lite"/>
    </source>
</evidence>
<evidence type="ECO:0000305" key="4"/>
<sequence>MTENVPQGQITMPLQQGGAREISPQALAVADYLRSHKLLKQRPGILNGKRSDFFRVKRAIRALEDPKYKQLQSKPNSKLPPINSRNEAISIFRLMPINQMALRVDKLPTQTALMMKQKPEQGVPVLQVNPQQEFGDDMYYTWFYNPVPLTTYLYGALGVAAIFAGVLFPLWPIFLRQGVWYLSVGMLGLIGVFFGIALVRLVIFVLTWPTVKPGIWIFPNLFADVGFVDSFIPLWAWHGTPERDLLPQKFKNKKKKKNAGTVIESKEPPRKLTKEEKQKQKEANAQMEQMQAAFQTQLSSFATQMQQIKEMSDSGIDPQIIAAQLQAQYPPDKQAAIKLENEQAQAKLDERIRELAAQIQDKTNANKTGDKIEEVADKENKEAPKRIVTLEDANDE</sequence>
<dbReference type="EMBL" id="X99537">
    <property type="protein sequence ID" value="CAA67878.1"/>
    <property type="molecule type" value="Genomic_DNA"/>
</dbReference>
<dbReference type="EMBL" id="CR382128">
    <property type="protein sequence ID" value="CAG83273.1"/>
    <property type="molecule type" value="Genomic_DNA"/>
</dbReference>
<dbReference type="RefSeq" id="XP_501020.1">
    <property type="nucleotide sequence ID" value="XM_501020.1"/>
</dbReference>
<dbReference type="SMR" id="Q99161"/>
<dbReference type="FunCoup" id="Q99161">
    <property type="interactions" value="128"/>
</dbReference>
<dbReference type="STRING" id="284591.Q99161"/>
<dbReference type="EnsemblFungi" id="CAG83273">
    <property type="protein sequence ID" value="CAG83273"/>
    <property type="gene ID" value="YALI0_B17512g"/>
</dbReference>
<dbReference type="KEGG" id="yli:2907281"/>
<dbReference type="VEuPathDB" id="FungiDB:YALI0_B17512g"/>
<dbReference type="HOGENOM" id="CLU_040936_1_0_1"/>
<dbReference type="InParanoid" id="Q99161"/>
<dbReference type="OrthoDB" id="118802at4891"/>
<dbReference type="Proteomes" id="UP000001300">
    <property type="component" value="Chromosome B"/>
</dbReference>
<dbReference type="GO" id="GO:0005783">
    <property type="term" value="C:endoplasmic reticulum"/>
    <property type="evidence" value="ECO:0000318"/>
    <property type="project" value="GO_Central"/>
</dbReference>
<dbReference type="GO" id="GO:0005789">
    <property type="term" value="C:endoplasmic reticulum membrane"/>
    <property type="evidence" value="ECO:0007669"/>
    <property type="project" value="UniProtKB-SubCell"/>
</dbReference>
<dbReference type="GO" id="GO:0016020">
    <property type="term" value="C:membrane"/>
    <property type="evidence" value="ECO:0000318"/>
    <property type="project" value="GO_Central"/>
</dbReference>
<dbReference type="GO" id="GO:0031204">
    <property type="term" value="P:post-translational protein targeting to membrane, translocation"/>
    <property type="evidence" value="ECO:0000318"/>
    <property type="project" value="GO_Central"/>
</dbReference>
<dbReference type="InterPro" id="IPR004728">
    <property type="entry name" value="Sec62"/>
</dbReference>
<dbReference type="InterPro" id="IPR011553">
    <property type="entry name" value="Sec62_asco"/>
</dbReference>
<dbReference type="NCBIfam" id="TIGR00869">
    <property type="entry name" value="sec62"/>
    <property type="match status" value="1"/>
</dbReference>
<dbReference type="PANTHER" id="PTHR12443">
    <property type="entry name" value="TRANSLOCATION PROTEIN SEC62"/>
    <property type="match status" value="1"/>
</dbReference>
<dbReference type="PANTHER" id="PTHR12443:SF9">
    <property type="entry name" value="TRANSLOCATION PROTEIN SEC62"/>
    <property type="match status" value="1"/>
</dbReference>
<dbReference type="Pfam" id="PF03839">
    <property type="entry name" value="Sec62"/>
    <property type="match status" value="1"/>
</dbReference>
<gene>
    <name type="primary">SEC62</name>
    <name type="ordered locus">YALI0B17512g</name>
</gene>
<organism>
    <name type="scientific">Yarrowia lipolytica (strain CLIB 122 / E 150)</name>
    <name type="common">Yeast</name>
    <name type="synonym">Candida lipolytica</name>
    <dbReference type="NCBI Taxonomy" id="284591"/>
    <lineage>
        <taxon>Eukaryota</taxon>
        <taxon>Fungi</taxon>
        <taxon>Dikarya</taxon>
        <taxon>Ascomycota</taxon>
        <taxon>Saccharomycotina</taxon>
        <taxon>Dipodascomycetes</taxon>
        <taxon>Dipodascales</taxon>
        <taxon>Dipodascales incertae sedis</taxon>
        <taxon>Yarrowia</taxon>
    </lineage>
</organism>
<comment type="function">
    <text evidence="1">Required for preprotein translocation.</text>
</comment>
<comment type="subunit">
    <text evidence="1">Part of a complex that contains SEC61, SEC62, SEC63, SEC66 and SEC72.</text>
</comment>
<comment type="subcellular location">
    <subcellularLocation>
        <location>Endoplasmic reticulum membrane</location>
        <topology>Multi-pass membrane protein</topology>
    </subcellularLocation>
</comment>
<comment type="similarity">
    <text evidence="4">Belongs to the SEC62 family.</text>
</comment>
<feature type="chain" id="PRO_0000206626" description="Translocation protein SEC62">
    <location>
        <begin position="1"/>
        <end position="396"/>
    </location>
</feature>
<feature type="topological domain" description="Cytoplasmic" evidence="2">
    <location>
        <begin position="1"/>
        <end position="154"/>
    </location>
</feature>
<feature type="transmembrane region" description="Helical" evidence="2">
    <location>
        <begin position="155"/>
        <end position="175"/>
    </location>
</feature>
<feature type="topological domain" description="Lumenal" evidence="2">
    <location>
        <begin position="176"/>
        <end position="178"/>
    </location>
</feature>
<feature type="transmembrane region" description="Helical" evidence="2">
    <location>
        <begin position="179"/>
        <end position="199"/>
    </location>
</feature>
<feature type="topological domain" description="Cytoplasmic" evidence="2">
    <location>
        <begin position="200"/>
        <end position="396"/>
    </location>
</feature>
<feature type="region of interest" description="Disordered" evidence="3">
    <location>
        <begin position="252"/>
        <end position="288"/>
    </location>
</feature>
<feature type="region of interest" description="Disordered" evidence="3">
    <location>
        <begin position="360"/>
        <end position="396"/>
    </location>
</feature>
<feature type="compositionally biased region" description="Basic and acidic residues" evidence="3">
    <location>
        <begin position="264"/>
        <end position="282"/>
    </location>
</feature>
<feature type="compositionally biased region" description="Basic and acidic residues" evidence="3">
    <location>
        <begin position="368"/>
        <end position="389"/>
    </location>
</feature>
<feature type="sequence conflict" description="In Ref. 1; CAA67878." evidence="4" ref="1">
    <original>A</original>
    <variation>V</variation>
    <location>
        <position position="236"/>
    </location>
</feature>
<name>SEC62_YARLI</name>
<protein>
    <recommendedName>
        <fullName>Translocation protein SEC62</fullName>
    </recommendedName>
</protein>
<proteinExistence type="inferred from homology"/>